<accession>Q61UA0</accession>
<accession>A8WZT5</accession>
<name>UFSP_CAEBR</name>
<keyword id="KW-0963">Cytoplasm</keyword>
<keyword id="KW-0256">Endoplasmic reticulum</keyword>
<keyword id="KW-0378">Hydrolase</keyword>
<keyword id="KW-0472">Membrane</keyword>
<keyword id="KW-0645">Protease</keyword>
<keyword id="KW-1185">Reference proteome</keyword>
<keyword id="KW-0788">Thiol protease</keyword>
<keyword id="KW-0833">Ubl conjugation pathway</keyword>
<comment type="function">
    <text evidence="2 3">Thiol protease which recognizes and hydrolyzes the peptide bond at the C-terminal Gly of ufm-1, a ubiquitin-like modifier protein bound to a number of target proteins. Required, with oct-4, for the localization of a subset of 7 transmembrane domain odorant receptors, including odr-10, to the cilia of olfactory neurons AWA and AWC. Operates in aggregation behavior, and responses to oxygen levels.</text>
</comment>
<comment type="subunit">
    <text evidence="1">Interacts with odr-4.</text>
</comment>
<comment type="subcellular location">
    <subcellularLocation>
        <location evidence="2">Endoplasmic reticulum membrane</location>
        <topology evidence="2">Peripheral membrane protein</topology>
    </subcellularLocation>
    <subcellularLocation>
        <location evidence="2">Cytoplasm</location>
    </subcellularLocation>
    <subcellularLocation>
        <location evidence="2">Cytoplasm</location>
        <location evidence="2">Perinuclear region</location>
    </subcellularLocation>
    <text evidence="2">Recruited to the endoplasmic reticulum upon interaction with odr-4.</text>
</comment>
<comment type="similarity">
    <text evidence="4">Belongs to the peptidase C78 family.</text>
</comment>
<feature type="chain" id="PRO_0000280369" description="Ufm1-specific protease">
    <location>
        <begin position="1"/>
        <end position="588"/>
    </location>
</feature>
<feature type="active site" evidence="1">
    <location>
        <position position="420"/>
    </location>
</feature>
<feature type="active site" evidence="1">
    <location>
        <position position="544"/>
    </location>
</feature>
<feature type="active site" evidence="1">
    <location>
        <position position="546"/>
    </location>
</feature>
<gene>
    <name evidence="5" type="primary">odr-8</name>
    <name evidence="5" type="synonym">ufsp-2</name>
    <name evidence="5" type="ORF">CBG05410</name>
</gene>
<proteinExistence type="inferred from homology"/>
<organism>
    <name type="scientific">Caenorhabditis briggsae</name>
    <dbReference type="NCBI Taxonomy" id="6238"/>
    <lineage>
        <taxon>Eukaryota</taxon>
        <taxon>Metazoa</taxon>
        <taxon>Ecdysozoa</taxon>
        <taxon>Nematoda</taxon>
        <taxon>Chromadorea</taxon>
        <taxon>Rhabditida</taxon>
        <taxon>Rhabditina</taxon>
        <taxon>Rhabditomorpha</taxon>
        <taxon>Rhabditoidea</taxon>
        <taxon>Rhabditidae</taxon>
        <taxon>Peloderinae</taxon>
        <taxon>Caenorhabditis</taxon>
    </lineage>
</organism>
<protein>
    <recommendedName>
        <fullName evidence="3">Ufm1-specific protease</fullName>
        <shortName evidence="3">UfSP</shortName>
        <ecNumber>3.4.22.-</ecNumber>
    </recommendedName>
    <alternativeName>
        <fullName>Odorant response abnormal protein 8</fullName>
    </alternativeName>
</protein>
<sequence length="588" mass="66332">MSGSQTVSVIGYTKMAPQSPPATVNELWFIDTQAMFQNYANLRSFSKSNSTETQTTIGGVVFGRKARKQVIHVFFAYAEDLTESNLQFLESSLSSDIELVGNVNIDGQSTLIGNGTFTLQLSSKMLENKNTSEFLDQNVIFNNDHISMEGASCVSKVGFEWSLRAGREQEDVKSAAERLSMASFRFSYLNAEHELVIREHKPETAKQKYMDKFTKGALPYKDVIEFTAMQSLTRDTSNDTEDQKLVPTVKVTKDNKHFTRLVTIGEVVFPAYFGDSSFDLYKRAREALNRRANNTMMVTVNGIRSGRGVTTTTSATYLPPGWVSLLHLQLPSKWTENEKRNYRIRLHKLFNLPSSKPCLRLSQSLPLHSESVRLTNKKLIREPHLSISNYQPAGVVTAVKGPYNYHHYMQDGIDDSGWGCAYRSFQTIWSWFILNGYTDKPVPSHRDIQQALVNIGDKEQKFVGSRQWIGSTEISYVLNELLKLECRFIATNSGAEVVERARELARHFETSGTPVMIGGNMLAHTILGVDFNEMTGETKFLILDPHYTGSEDIKTITSKGWCAWKPASFWSADHFYNMVLAQPPTDSI</sequence>
<evidence type="ECO:0000250" key="1"/>
<evidence type="ECO:0000250" key="2">
    <source>
        <dbReference type="UniProtKB" id="Q94218"/>
    </source>
</evidence>
<evidence type="ECO:0000250" key="3">
    <source>
        <dbReference type="UniProtKB" id="Q9NUQ7"/>
    </source>
</evidence>
<evidence type="ECO:0000305" key="4"/>
<evidence type="ECO:0000312" key="5">
    <source>
        <dbReference type="WormBase" id="CBG05410"/>
    </source>
</evidence>
<dbReference type="EC" id="3.4.22.-"/>
<dbReference type="EMBL" id="HE601369">
    <property type="protein sequence ID" value="CAP25895.1"/>
    <property type="molecule type" value="Genomic_DNA"/>
</dbReference>
<dbReference type="RefSeq" id="XP_002633543.1">
    <property type="nucleotide sequence ID" value="XM_002633497.1"/>
</dbReference>
<dbReference type="SMR" id="Q61UA0"/>
<dbReference type="FunCoup" id="Q61UA0">
    <property type="interactions" value="5"/>
</dbReference>
<dbReference type="STRING" id="6238.Q61UA0"/>
<dbReference type="MEROPS" id="C78.A03"/>
<dbReference type="EnsemblMetazoa" id="CBG05410.1">
    <property type="protein sequence ID" value="CBG05410.1"/>
    <property type="gene ID" value="WBGene00027865"/>
</dbReference>
<dbReference type="GeneID" id="8575540"/>
<dbReference type="KEGG" id="cbr:CBG_05410"/>
<dbReference type="CTD" id="8575540"/>
<dbReference type="WormBase" id="CBG05410">
    <property type="protein sequence ID" value="CBP01387"/>
    <property type="gene ID" value="WBGene00027865"/>
    <property type="gene designation" value="Cbr-odr-8"/>
</dbReference>
<dbReference type="eggNOG" id="KOG2433">
    <property type="taxonomic scope" value="Eukaryota"/>
</dbReference>
<dbReference type="HOGENOM" id="CLU_033013_0_0_1"/>
<dbReference type="InParanoid" id="Q61UA0"/>
<dbReference type="OMA" id="NGFTDKP"/>
<dbReference type="Proteomes" id="UP000008549">
    <property type="component" value="Unassembled WGS sequence"/>
</dbReference>
<dbReference type="GO" id="GO:0005783">
    <property type="term" value="C:endoplasmic reticulum"/>
    <property type="evidence" value="ECO:0000318"/>
    <property type="project" value="GO_Central"/>
</dbReference>
<dbReference type="GO" id="GO:0005789">
    <property type="term" value="C:endoplasmic reticulum membrane"/>
    <property type="evidence" value="ECO:0007669"/>
    <property type="project" value="UniProtKB-SubCell"/>
</dbReference>
<dbReference type="GO" id="GO:0005634">
    <property type="term" value="C:nucleus"/>
    <property type="evidence" value="ECO:0000318"/>
    <property type="project" value="GO_Central"/>
</dbReference>
<dbReference type="GO" id="GO:0048471">
    <property type="term" value="C:perinuclear region of cytoplasm"/>
    <property type="evidence" value="ECO:0007669"/>
    <property type="project" value="UniProtKB-SubCell"/>
</dbReference>
<dbReference type="GO" id="GO:0032991">
    <property type="term" value="C:protein-containing complex"/>
    <property type="evidence" value="ECO:0007669"/>
    <property type="project" value="EnsemblMetazoa"/>
</dbReference>
<dbReference type="GO" id="GO:0071567">
    <property type="term" value="F:deUFMylase activity"/>
    <property type="evidence" value="ECO:0000318"/>
    <property type="project" value="GO_Central"/>
</dbReference>
<dbReference type="GO" id="GO:0050921">
    <property type="term" value="P:positive regulation of chemotaxis"/>
    <property type="evidence" value="ECO:0007669"/>
    <property type="project" value="EnsemblMetazoa"/>
</dbReference>
<dbReference type="GO" id="GO:0097499">
    <property type="term" value="P:protein localization to non-motile cilium"/>
    <property type="evidence" value="ECO:0007669"/>
    <property type="project" value="EnsemblMetazoa"/>
</dbReference>
<dbReference type="GO" id="GO:0006508">
    <property type="term" value="P:proteolysis"/>
    <property type="evidence" value="ECO:0000318"/>
    <property type="project" value="GO_Central"/>
</dbReference>
<dbReference type="GO" id="GO:0045471">
    <property type="term" value="P:response to ethanol"/>
    <property type="evidence" value="ECO:0007669"/>
    <property type="project" value="EnsemblMetazoa"/>
</dbReference>
<dbReference type="FunFam" id="3.90.70.130:FF:000001">
    <property type="entry name" value="Probable Ufm1-specific protease 2"/>
    <property type="match status" value="1"/>
</dbReference>
<dbReference type="Gene3D" id="3.90.70.130">
    <property type="match status" value="1"/>
</dbReference>
<dbReference type="InterPro" id="IPR038765">
    <property type="entry name" value="Papain-like_cys_pep_sf"/>
</dbReference>
<dbReference type="InterPro" id="IPR012462">
    <property type="entry name" value="UfSP1/2_DUB_cat"/>
</dbReference>
<dbReference type="InterPro" id="IPR049387">
    <property type="entry name" value="UfSP2-like_N"/>
</dbReference>
<dbReference type="InterPro" id="IPR054308">
    <property type="entry name" value="UfSP_MPN"/>
</dbReference>
<dbReference type="PANTHER" id="PTHR48153">
    <property type="entry name" value="UFM1-SPECIFIC PROTEASE 2"/>
    <property type="match status" value="1"/>
</dbReference>
<dbReference type="PANTHER" id="PTHR48153:SF2">
    <property type="entry name" value="UFM1-SPECIFIC PROTEASE 2"/>
    <property type="match status" value="1"/>
</dbReference>
<dbReference type="Pfam" id="PF07910">
    <property type="entry name" value="Peptidase_C78"/>
    <property type="match status" value="1"/>
</dbReference>
<dbReference type="Pfam" id="PF20908">
    <property type="entry name" value="UfSP2_N"/>
    <property type="match status" value="1"/>
</dbReference>
<dbReference type="Pfam" id="PF22084">
    <property type="entry name" value="UfSP_MPN_N"/>
    <property type="match status" value="1"/>
</dbReference>
<dbReference type="SUPFAM" id="SSF54001">
    <property type="entry name" value="Cysteine proteinases"/>
    <property type="match status" value="1"/>
</dbReference>
<reference key="1">
    <citation type="journal article" date="2003" name="PLoS Biol.">
        <title>The genome sequence of Caenorhabditis briggsae: a platform for comparative genomics.</title>
        <authorList>
            <person name="Stein L.D."/>
            <person name="Bao Z."/>
            <person name="Blasiar D."/>
            <person name="Blumenthal T."/>
            <person name="Brent M.R."/>
            <person name="Chen N."/>
            <person name="Chinwalla A."/>
            <person name="Clarke L."/>
            <person name="Clee C."/>
            <person name="Coghlan A."/>
            <person name="Coulson A."/>
            <person name="D'Eustachio P."/>
            <person name="Fitch D.H.A."/>
            <person name="Fulton L.A."/>
            <person name="Fulton R.E."/>
            <person name="Griffiths-Jones S."/>
            <person name="Harris T.W."/>
            <person name="Hillier L.W."/>
            <person name="Kamath R."/>
            <person name="Kuwabara P.E."/>
            <person name="Mardis E.R."/>
            <person name="Marra M.A."/>
            <person name="Miner T.L."/>
            <person name="Minx P."/>
            <person name="Mullikin J.C."/>
            <person name="Plumb R.W."/>
            <person name="Rogers J."/>
            <person name="Schein J.E."/>
            <person name="Sohrmann M."/>
            <person name="Spieth J."/>
            <person name="Stajich J.E."/>
            <person name="Wei C."/>
            <person name="Willey D."/>
            <person name="Wilson R.K."/>
            <person name="Durbin R.M."/>
            <person name="Waterston R.H."/>
        </authorList>
    </citation>
    <scope>NUCLEOTIDE SEQUENCE [LARGE SCALE GENOMIC DNA]</scope>
    <source>
        <strain>AF16</strain>
    </source>
</reference>